<organism>
    <name type="scientific">Rhodocyclus tenuis</name>
    <name type="common">Rhodospirillum tenue</name>
    <dbReference type="NCBI Taxonomy" id="1066"/>
    <lineage>
        <taxon>Bacteria</taxon>
        <taxon>Pseudomonadati</taxon>
        <taxon>Pseudomonadota</taxon>
        <taxon>Betaproteobacteria</taxon>
        <taxon>Rhodocyclales</taxon>
        <taxon>Rhodocyclaceae</taxon>
        <taxon>Rhodocyclus</taxon>
    </lineage>
</organism>
<proteinExistence type="evidence at protein level"/>
<feature type="chain" id="PRO_0000099840" description="Light-harvesting polypeptide B-885 beta-2 chain">
    <location>
        <begin position="1"/>
        <end position="48"/>
    </location>
</feature>
<feature type="topological domain" description="Cytoplasmic" evidence="1">
    <location>
        <begin position="1"/>
        <end position="20"/>
    </location>
</feature>
<feature type="transmembrane region" description="Helical" evidence="1">
    <location>
        <begin position="21"/>
        <end position="43"/>
    </location>
</feature>
<feature type="topological domain" description="Periplasmic" evidence="1">
    <location>
        <begin position="44"/>
        <end position="48"/>
    </location>
</feature>
<feature type="binding site" description="axial binding residue" evidence="1">
    <location>
        <position position="37"/>
    </location>
    <ligand>
        <name>a bacteriochlorophyll</name>
        <dbReference type="ChEBI" id="CHEBI:38201"/>
    </ligand>
    <ligandPart>
        <name>Mg</name>
        <dbReference type="ChEBI" id="CHEBI:25107"/>
    </ligandPart>
</feature>
<sequence length="48" mass="5358">AEDRKSLSGLTEQEAQEFGTLYTQGVAFVAVIAIVAHALVWAWRPWLQ</sequence>
<evidence type="ECO:0000255" key="1"/>
<evidence type="ECO:0000305" key="2"/>
<comment type="function">
    <text>Antenna complexes are light-harvesting systems, which transfer the excitation energy to the reaction centers.</text>
</comment>
<comment type="subunit">
    <text>The core complex is formed by different alpha and beta chains, binding bacteriochlorophyll molecules, and arranged most probably in tetrameric structures disposed around the reaction center. The non-pigmented gamma chains may constitute additional components.</text>
</comment>
<comment type="subcellular location">
    <subcellularLocation>
        <location>Cell inner membrane</location>
        <topology>Single-pass type II membrane protein</topology>
    </subcellularLocation>
</comment>
<comment type="similarity">
    <text evidence="2">Belongs to the antenna complex beta subunit family.</text>
</comment>
<protein>
    <recommendedName>
        <fullName>Light-harvesting polypeptide B-885 beta-2 chain</fullName>
    </recommendedName>
    <alternativeName>
        <fullName>Antenna pigment polypeptide beta-2 chain</fullName>
    </alternativeName>
    <alternativeName>
        <fullName>LH-1</fullName>
    </alternativeName>
</protein>
<reference key="1">
    <citation type="journal article" date="1996" name="Eur. J. Biochem.">
        <title>The antenna complexes of the purple non-sulfur photosynthetic bacterium Rhodocyclus tenuis. Structural and spectral characterization.</title>
        <authorList>
            <person name="Hu Q."/>
            <person name="Brunisholz R.A."/>
            <person name="Frank G."/>
            <person name="Zuber H."/>
        </authorList>
    </citation>
    <scope>PROTEIN SEQUENCE</scope>
    <source>
        <strain>ATCC 25093 / DSM 109 / 2761</strain>
    </source>
</reference>
<name>LHB2_RHOTE</name>
<accession>P80591</accession>
<dbReference type="PIR" id="S68886">
    <property type="entry name" value="S68886"/>
</dbReference>
<dbReference type="SMR" id="P80591"/>
<dbReference type="GO" id="GO:0005886">
    <property type="term" value="C:plasma membrane"/>
    <property type="evidence" value="ECO:0007669"/>
    <property type="project" value="UniProtKB-SubCell"/>
</dbReference>
<dbReference type="GO" id="GO:0030077">
    <property type="term" value="C:plasma membrane light-harvesting complex"/>
    <property type="evidence" value="ECO:0007669"/>
    <property type="project" value="InterPro"/>
</dbReference>
<dbReference type="GO" id="GO:0042314">
    <property type="term" value="F:bacteriochlorophyll binding"/>
    <property type="evidence" value="ECO:0007669"/>
    <property type="project" value="UniProtKB-KW"/>
</dbReference>
<dbReference type="GO" id="GO:0045156">
    <property type="term" value="F:electron transporter, transferring electrons within the cyclic electron transport pathway of photosynthesis activity"/>
    <property type="evidence" value="ECO:0007669"/>
    <property type="project" value="InterPro"/>
</dbReference>
<dbReference type="GO" id="GO:0046872">
    <property type="term" value="F:metal ion binding"/>
    <property type="evidence" value="ECO:0007669"/>
    <property type="project" value="UniProtKB-KW"/>
</dbReference>
<dbReference type="GO" id="GO:0019684">
    <property type="term" value="P:photosynthesis, light reaction"/>
    <property type="evidence" value="ECO:0007669"/>
    <property type="project" value="InterPro"/>
</dbReference>
<dbReference type="Gene3D" id="1.20.5.250">
    <property type="match status" value="1"/>
</dbReference>
<dbReference type="InterPro" id="IPR000066">
    <property type="entry name" value="Antenna_a/b"/>
</dbReference>
<dbReference type="InterPro" id="IPR023623">
    <property type="entry name" value="Antenna_beta_CS"/>
</dbReference>
<dbReference type="InterPro" id="IPR023624">
    <property type="entry name" value="Antenna_beta_dom_sf"/>
</dbReference>
<dbReference type="InterPro" id="IPR002362">
    <property type="entry name" value="LHB-1/5"/>
</dbReference>
<dbReference type="InterPro" id="IPR035889">
    <property type="entry name" value="Light-harvesting_complex"/>
</dbReference>
<dbReference type="NCBIfam" id="NF040862">
    <property type="entry name" value="pufB_517_ASD"/>
    <property type="match status" value="1"/>
</dbReference>
<dbReference type="Pfam" id="PF00556">
    <property type="entry name" value="LHC"/>
    <property type="match status" value="1"/>
</dbReference>
<dbReference type="PIRSF" id="PIRSF002900">
    <property type="entry name" value="Antenna_beta"/>
    <property type="match status" value="1"/>
</dbReference>
<dbReference type="PRINTS" id="PR00674">
    <property type="entry name" value="LIGHTHARVSTB"/>
</dbReference>
<dbReference type="SUPFAM" id="SSF56918">
    <property type="entry name" value="Light-harvesting complex subunits"/>
    <property type="match status" value="1"/>
</dbReference>
<dbReference type="PROSITE" id="PS00969">
    <property type="entry name" value="ANTENNA_COMP_BETA"/>
    <property type="match status" value="1"/>
</dbReference>
<keyword id="KW-0042">Antenna complex</keyword>
<keyword id="KW-0076">Bacteriochlorophyll</keyword>
<keyword id="KW-0997">Cell inner membrane</keyword>
<keyword id="KW-1003">Cell membrane</keyword>
<keyword id="KW-0148">Chlorophyll</keyword>
<keyword id="KW-0157">Chromophore</keyword>
<keyword id="KW-0903">Direct protein sequencing</keyword>
<keyword id="KW-0437">Light-harvesting polypeptide</keyword>
<keyword id="KW-0460">Magnesium</keyword>
<keyword id="KW-0472">Membrane</keyword>
<keyword id="KW-0479">Metal-binding</keyword>
<keyword id="KW-0812">Transmembrane</keyword>
<keyword id="KW-1133">Transmembrane helix</keyword>